<comment type="similarity">
    <text evidence="1">Belongs to the bacterial ribosomal protein bL36 family.</text>
</comment>
<name>RL36_ALKOO</name>
<feature type="chain" id="PRO_1000059031" description="Large ribosomal subunit protein bL36">
    <location>
        <begin position="1"/>
        <end position="37"/>
    </location>
</feature>
<keyword id="KW-1185">Reference proteome</keyword>
<keyword id="KW-0687">Ribonucleoprotein</keyword>
<keyword id="KW-0689">Ribosomal protein</keyword>
<reference key="1">
    <citation type="submission" date="2007-10" db="EMBL/GenBank/DDBJ databases">
        <title>Complete genome of Alkaliphilus oremlandii OhILAs.</title>
        <authorList>
            <person name="Copeland A."/>
            <person name="Lucas S."/>
            <person name="Lapidus A."/>
            <person name="Barry K."/>
            <person name="Detter J.C."/>
            <person name="Glavina del Rio T."/>
            <person name="Hammon N."/>
            <person name="Israni S."/>
            <person name="Dalin E."/>
            <person name="Tice H."/>
            <person name="Pitluck S."/>
            <person name="Chain P."/>
            <person name="Malfatti S."/>
            <person name="Shin M."/>
            <person name="Vergez L."/>
            <person name="Schmutz J."/>
            <person name="Larimer F."/>
            <person name="Land M."/>
            <person name="Hauser L."/>
            <person name="Kyrpides N."/>
            <person name="Mikhailova N."/>
            <person name="Stolz J.F."/>
            <person name="Dawson A."/>
            <person name="Fisher E."/>
            <person name="Crable B."/>
            <person name="Perera E."/>
            <person name="Lisak J."/>
            <person name="Ranganathan M."/>
            <person name="Basu P."/>
            <person name="Richardson P."/>
        </authorList>
    </citation>
    <scope>NUCLEOTIDE SEQUENCE [LARGE SCALE GENOMIC DNA]</scope>
    <source>
        <strain>OhILAs</strain>
    </source>
</reference>
<sequence length="37" mass="4248">MKVRPSVKPICEKCKIIKRGGRVMVICENPKHKQKQG</sequence>
<proteinExistence type="inferred from homology"/>
<evidence type="ECO:0000255" key="1">
    <source>
        <dbReference type="HAMAP-Rule" id="MF_00251"/>
    </source>
</evidence>
<evidence type="ECO:0000305" key="2"/>
<organism>
    <name type="scientific">Alkaliphilus oremlandii (strain OhILAs)</name>
    <name type="common">Clostridium oremlandii (strain OhILAs)</name>
    <dbReference type="NCBI Taxonomy" id="350688"/>
    <lineage>
        <taxon>Bacteria</taxon>
        <taxon>Bacillati</taxon>
        <taxon>Bacillota</taxon>
        <taxon>Clostridia</taxon>
        <taxon>Peptostreptococcales</taxon>
        <taxon>Natronincolaceae</taxon>
        <taxon>Alkaliphilus</taxon>
    </lineage>
</organism>
<accession>A8MLG5</accession>
<protein>
    <recommendedName>
        <fullName evidence="1">Large ribosomal subunit protein bL36</fullName>
    </recommendedName>
    <alternativeName>
        <fullName evidence="2">50S ribosomal protein L36</fullName>
    </alternativeName>
</protein>
<gene>
    <name evidence="1" type="primary">rpmJ</name>
    <name type="ordered locus">Clos_0517</name>
</gene>
<dbReference type="EMBL" id="CP000853">
    <property type="protein sequence ID" value="ABW18079.1"/>
    <property type="molecule type" value="Genomic_DNA"/>
</dbReference>
<dbReference type="RefSeq" id="WP_012158393.1">
    <property type="nucleotide sequence ID" value="NC_009922.1"/>
</dbReference>
<dbReference type="SMR" id="A8MLG5"/>
<dbReference type="STRING" id="350688.Clos_0517"/>
<dbReference type="KEGG" id="aoe:Clos_0517"/>
<dbReference type="eggNOG" id="COG0257">
    <property type="taxonomic scope" value="Bacteria"/>
</dbReference>
<dbReference type="HOGENOM" id="CLU_135723_6_2_9"/>
<dbReference type="OrthoDB" id="9802520at2"/>
<dbReference type="Proteomes" id="UP000000269">
    <property type="component" value="Chromosome"/>
</dbReference>
<dbReference type="GO" id="GO:0005737">
    <property type="term" value="C:cytoplasm"/>
    <property type="evidence" value="ECO:0007669"/>
    <property type="project" value="UniProtKB-ARBA"/>
</dbReference>
<dbReference type="GO" id="GO:1990904">
    <property type="term" value="C:ribonucleoprotein complex"/>
    <property type="evidence" value="ECO:0007669"/>
    <property type="project" value="UniProtKB-KW"/>
</dbReference>
<dbReference type="GO" id="GO:0005840">
    <property type="term" value="C:ribosome"/>
    <property type="evidence" value="ECO:0007669"/>
    <property type="project" value="UniProtKB-KW"/>
</dbReference>
<dbReference type="GO" id="GO:0003735">
    <property type="term" value="F:structural constituent of ribosome"/>
    <property type="evidence" value="ECO:0007669"/>
    <property type="project" value="InterPro"/>
</dbReference>
<dbReference type="GO" id="GO:0006412">
    <property type="term" value="P:translation"/>
    <property type="evidence" value="ECO:0007669"/>
    <property type="project" value="UniProtKB-UniRule"/>
</dbReference>
<dbReference type="HAMAP" id="MF_00251">
    <property type="entry name" value="Ribosomal_bL36"/>
    <property type="match status" value="1"/>
</dbReference>
<dbReference type="InterPro" id="IPR000473">
    <property type="entry name" value="Ribosomal_bL36"/>
</dbReference>
<dbReference type="InterPro" id="IPR035977">
    <property type="entry name" value="Ribosomal_bL36_sp"/>
</dbReference>
<dbReference type="NCBIfam" id="TIGR01022">
    <property type="entry name" value="rpmJ_bact"/>
    <property type="match status" value="1"/>
</dbReference>
<dbReference type="PANTHER" id="PTHR42888">
    <property type="entry name" value="50S RIBOSOMAL PROTEIN L36, CHLOROPLASTIC"/>
    <property type="match status" value="1"/>
</dbReference>
<dbReference type="PANTHER" id="PTHR42888:SF1">
    <property type="entry name" value="LARGE RIBOSOMAL SUBUNIT PROTEIN BL36C"/>
    <property type="match status" value="1"/>
</dbReference>
<dbReference type="Pfam" id="PF00444">
    <property type="entry name" value="Ribosomal_L36"/>
    <property type="match status" value="1"/>
</dbReference>
<dbReference type="SUPFAM" id="SSF57840">
    <property type="entry name" value="Ribosomal protein L36"/>
    <property type="match status" value="1"/>
</dbReference>
<dbReference type="PROSITE" id="PS00828">
    <property type="entry name" value="RIBOSOMAL_L36"/>
    <property type="match status" value="1"/>
</dbReference>